<comment type="function">
    <text evidence="1">CRISPR (clustered regularly interspaced short palindromic repeat), is an adaptive immune system that provides protection against mobile genetic elements (viruses, transposable elements and conjugative plasmids). CRISPR clusters contain sequences complementary to antecedent mobile elements and target invading nucleic acids. CRISPR clusters are transcribed and processed into CRISPR RNA (crRNA). Functions as a ssRNA-specific endoribonuclease. Involved in the integration of spacer DNA into the CRISPR cassette.</text>
</comment>
<comment type="cofactor">
    <cofactor evidence="1">
        <name>Mg(2+)</name>
        <dbReference type="ChEBI" id="CHEBI:18420"/>
    </cofactor>
</comment>
<comment type="subunit">
    <text evidence="1">Homodimer, forms a heterotetramer with a Cas1 homodimer.</text>
</comment>
<comment type="similarity">
    <text evidence="1">Belongs to the CRISPR-associated endoribonuclease Cas2 protein family.</text>
</comment>
<evidence type="ECO:0000255" key="1">
    <source>
        <dbReference type="HAMAP-Rule" id="MF_01471"/>
    </source>
</evidence>
<name>CAS2_ALLVD</name>
<organism>
    <name type="scientific">Allochromatium vinosum (strain ATCC 17899 / DSM 180 / NBRC 103801 / NCIMB 10441 / D)</name>
    <name type="common">Chromatium vinosum</name>
    <dbReference type="NCBI Taxonomy" id="572477"/>
    <lineage>
        <taxon>Bacteria</taxon>
        <taxon>Pseudomonadati</taxon>
        <taxon>Pseudomonadota</taxon>
        <taxon>Gammaproteobacteria</taxon>
        <taxon>Chromatiales</taxon>
        <taxon>Chromatiaceae</taxon>
        <taxon>Allochromatium</taxon>
    </lineage>
</organism>
<accession>D3RW30</accession>
<keyword id="KW-0051">Antiviral defense</keyword>
<keyword id="KW-0255">Endonuclease</keyword>
<keyword id="KW-0378">Hydrolase</keyword>
<keyword id="KW-0460">Magnesium</keyword>
<keyword id="KW-0479">Metal-binding</keyword>
<keyword id="KW-0540">Nuclease</keyword>
<keyword id="KW-0614">Plasmid</keyword>
<keyword id="KW-1185">Reference proteome</keyword>
<proteinExistence type="inferred from homology"/>
<protein>
    <recommendedName>
        <fullName evidence="1">CRISPR-associated endoribonuclease Cas2</fullName>
        <ecNumber evidence="1">3.1.-.-</ecNumber>
    </recommendedName>
</protein>
<sequence>MSSRLAVFAYDIRDDRVRRHALKTLREWRLDGQLSVHECQVDAIQARRLFEQLGDELDPATDAWLFTWVEGHRAVLARGKGRTTALQDGLLLAA</sequence>
<dbReference type="EC" id="3.1.-.-" evidence="1"/>
<dbReference type="EMBL" id="CP001897">
    <property type="protein sequence ID" value="ADC64042.1"/>
    <property type="molecule type" value="Genomic_DNA"/>
</dbReference>
<dbReference type="RefSeq" id="WP_012972306.1">
    <property type="nucleotide sequence ID" value="NC_013852.1"/>
</dbReference>
<dbReference type="SMR" id="D3RW30"/>
<dbReference type="KEGG" id="alv:Alvin_3144"/>
<dbReference type="HOGENOM" id="CLU_2379884_0_0_6"/>
<dbReference type="OrthoDB" id="5769689at2"/>
<dbReference type="Proteomes" id="UP000001441">
    <property type="component" value="Plasmid pALVIN01"/>
</dbReference>
<dbReference type="GO" id="GO:0046872">
    <property type="term" value="F:metal ion binding"/>
    <property type="evidence" value="ECO:0007669"/>
    <property type="project" value="UniProtKB-UniRule"/>
</dbReference>
<dbReference type="GO" id="GO:0004521">
    <property type="term" value="F:RNA endonuclease activity"/>
    <property type="evidence" value="ECO:0007669"/>
    <property type="project" value="InterPro"/>
</dbReference>
<dbReference type="GO" id="GO:0051607">
    <property type="term" value="P:defense response to virus"/>
    <property type="evidence" value="ECO:0007669"/>
    <property type="project" value="UniProtKB-UniRule"/>
</dbReference>
<dbReference type="GO" id="GO:0043571">
    <property type="term" value="P:maintenance of CRISPR repeat elements"/>
    <property type="evidence" value="ECO:0007669"/>
    <property type="project" value="UniProtKB-UniRule"/>
</dbReference>
<dbReference type="CDD" id="cd09725">
    <property type="entry name" value="Cas2_I_II_III"/>
    <property type="match status" value="1"/>
</dbReference>
<dbReference type="Gene3D" id="3.30.70.240">
    <property type="match status" value="1"/>
</dbReference>
<dbReference type="HAMAP" id="MF_01471">
    <property type="entry name" value="Cas2"/>
    <property type="match status" value="1"/>
</dbReference>
<dbReference type="InterPro" id="IPR021127">
    <property type="entry name" value="CRISPR_associated_Cas2"/>
</dbReference>
<dbReference type="InterPro" id="IPR019199">
    <property type="entry name" value="Virulence_VapD/CRISPR_Cas2"/>
</dbReference>
<dbReference type="Pfam" id="PF09827">
    <property type="entry name" value="CRISPR_Cas2"/>
    <property type="match status" value="1"/>
</dbReference>
<dbReference type="SUPFAM" id="SSF143430">
    <property type="entry name" value="TTP0101/SSO1404-like"/>
    <property type="match status" value="1"/>
</dbReference>
<reference key="1">
    <citation type="journal article" date="2011" name="Stand. Genomic Sci.">
        <title>Complete genome sequence of Allochromatium vinosum DSM 180(T).</title>
        <authorList>
            <person name="Weissgerber T."/>
            <person name="Zigann R."/>
            <person name="Bruce D."/>
            <person name="Chang Y.J."/>
            <person name="Detter J.C."/>
            <person name="Han C."/>
            <person name="Hauser L."/>
            <person name="Jeffries C.D."/>
            <person name="Land M."/>
            <person name="Munk A.C."/>
            <person name="Tapia R."/>
            <person name="Dahl C."/>
        </authorList>
    </citation>
    <scope>NUCLEOTIDE SEQUENCE [LARGE SCALE GENOMIC DNA]</scope>
    <source>
        <strain>ATCC 17899 / DSM 180 / NBRC 103801 / NCIMB 10441 / D</strain>
    </source>
</reference>
<geneLocation type="plasmid">
    <name>pALVIN01</name>
</geneLocation>
<feature type="chain" id="PRO_0000417702" description="CRISPR-associated endoribonuclease Cas2">
    <location>
        <begin position="1"/>
        <end position="94"/>
    </location>
</feature>
<feature type="binding site" evidence="1">
    <location>
        <position position="11"/>
    </location>
    <ligand>
        <name>Mg(2+)</name>
        <dbReference type="ChEBI" id="CHEBI:18420"/>
        <note>catalytic</note>
    </ligand>
</feature>
<gene>
    <name evidence="1" type="primary">cas2</name>
    <name type="ordered locus">Alvin_3144</name>
</gene>